<accession>A8LM41</accession>
<comment type="function">
    <text evidence="1">DNA-dependent RNA polymerase catalyzes the transcription of DNA into RNA using the four ribonucleoside triphosphates as substrates.</text>
</comment>
<comment type="catalytic activity">
    <reaction evidence="1">
        <text>RNA(n) + a ribonucleoside 5'-triphosphate = RNA(n+1) + diphosphate</text>
        <dbReference type="Rhea" id="RHEA:21248"/>
        <dbReference type="Rhea" id="RHEA-COMP:14527"/>
        <dbReference type="Rhea" id="RHEA-COMP:17342"/>
        <dbReference type="ChEBI" id="CHEBI:33019"/>
        <dbReference type="ChEBI" id="CHEBI:61557"/>
        <dbReference type="ChEBI" id="CHEBI:140395"/>
        <dbReference type="EC" id="2.7.7.6"/>
    </reaction>
</comment>
<comment type="cofactor">
    <cofactor evidence="1">
        <name>Mg(2+)</name>
        <dbReference type="ChEBI" id="CHEBI:18420"/>
    </cofactor>
    <text evidence="1">Binds 1 Mg(2+) ion per subunit.</text>
</comment>
<comment type="cofactor">
    <cofactor evidence="1">
        <name>Zn(2+)</name>
        <dbReference type="ChEBI" id="CHEBI:29105"/>
    </cofactor>
    <text evidence="1">Binds 2 Zn(2+) ions per subunit.</text>
</comment>
<comment type="subunit">
    <text evidence="1">The RNAP catalytic core consists of 2 alpha, 1 beta, 1 beta' and 1 omega subunit. When a sigma factor is associated with the core the holoenzyme is formed, which can initiate transcription.</text>
</comment>
<comment type="similarity">
    <text evidence="1">Belongs to the RNA polymerase beta' chain family.</text>
</comment>
<evidence type="ECO:0000255" key="1">
    <source>
        <dbReference type="HAMAP-Rule" id="MF_01322"/>
    </source>
</evidence>
<organism>
    <name type="scientific">Dinoroseobacter shibae (strain DSM 16493 / NCIMB 14021 / DFL 12)</name>
    <dbReference type="NCBI Taxonomy" id="398580"/>
    <lineage>
        <taxon>Bacteria</taxon>
        <taxon>Pseudomonadati</taxon>
        <taxon>Pseudomonadota</taxon>
        <taxon>Alphaproteobacteria</taxon>
        <taxon>Rhodobacterales</taxon>
        <taxon>Roseobacteraceae</taxon>
        <taxon>Dinoroseobacter</taxon>
    </lineage>
</organism>
<protein>
    <recommendedName>
        <fullName evidence="1">DNA-directed RNA polymerase subunit beta'</fullName>
        <shortName evidence="1">RNAP subunit beta'</shortName>
        <ecNumber evidence="1">2.7.7.6</ecNumber>
    </recommendedName>
    <alternativeName>
        <fullName evidence="1">RNA polymerase subunit beta'</fullName>
    </alternativeName>
    <alternativeName>
        <fullName evidence="1">Transcriptase subunit beta'</fullName>
    </alternativeName>
</protein>
<feature type="chain" id="PRO_0000353349" description="DNA-directed RNA polymerase subunit beta'">
    <location>
        <begin position="1"/>
        <end position="1415"/>
    </location>
</feature>
<feature type="binding site" evidence="1">
    <location>
        <position position="72"/>
    </location>
    <ligand>
        <name>Zn(2+)</name>
        <dbReference type="ChEBI" id="CHEBI:29105"/>
        <label>1</label>
    </ligand>
</feature>
<feature type="binding site" evidence="1">
    <location>
        <position position="74"/>
    </location>
    <ligand>
        <name>Zn(2+)</name>
        <dbReference type="ChEBI" id="CHEBI:29105"/>
        <label>1</label>
    </ligand>
</feature>
<feature type="binding site" evidence="1">
    <location>
        <position position="87"/>
    </location>
    <ligand>
        <name>Zn(2+)</name>
        <dbReference type="ChEBI" id="CHEBI:29105"/>
        <label>1</label>
    </ligand>
</feature>
<feature type="binding site" evidence="1">
    <location>
        <position position="90"/>
    </location>
    <ligand>
        <name>Zn(2+)</name>
        <dbReference type="ChEBI" id="CHEBI:29105"/>
        <label>1</label>
    </ligand>
</feature>
<feature type="binding site" evidence="1">
    <location>
        <position position="463"/>
    </location>
    <ligand>
        <name>Mg(2+)</name>
        <dbReference type="ChEBI" id="CHEBI:18420"/>
    </ligand>
</feature>
<feature type="binding site" evidence="1">
    <location>
        <position position="465"/>
    </location>
    <ligand>
        <name>Mg(2+)</name>
        <dbReference type="ChEBI" id="CHEBI:18420"/>
    </ligand>
</feature>
<feature type="binding site" evidence="1">
    <location>
        <position position="467"/>
    </location>
    <ligand>
        <name>Mg(2+)</name>
        <dbReference type="ChEBI" id="CHEBI:18420"/>
    </ligand>
</feature>
<feature type="binding site" evidence="1">
    <location>
        <position position="812"/>
    </location>
    <ligand>
        <name>Zn(2+)</name>
        <dbReference type="ChEBI" id="CHEBI:29105"/>
        <label>2</label>
    </ligand>
</feature>
<feature type="binding site" evidence="1">
    <location>
        <position position="886"/>
    </location>
    <ligand>
        <name>Zn(2+)</name>
        <dbReference type="ChEBI" id="CHEBI:29105"/>
        <label>2</label>
    </ligand>
</feature>
<feature type="binding site" evidence="1">
    <location>
        <position position="893"/>
    </location>
    <ligand>
        <name>Zn(2+)</name>
        <dbReference type="ChEBI" id="CHEBI:29105"/>
        <label>2</label>
    </ligand>
</feature>
<feature type="binding site" evidence="1">
    <location>
        <position position="896"/>
    </location>
    <ligand>
        <name>Zn(2+)</name>
        <dbReference type="ChEBI" id="CHEBI:29105"/>
        <label>2</label>
    </ligand>
</feature>
<keyword id="KW-0240">DNA-directed RNA polymerase</keyword>
<keyword id="KW-0460">Magnesium</keyword>
<keyword id="KW-0479">Metal-binding</keyword>
<keyword id="KW-0548">Nucleotidyltransferase</keyword>
<keyword id="KW-1185">Reference proteome</keyword>
<keyword id="KW-0804">Transcription</keyword>
<keyword id="KW-0808">Transferase</keyword>
<keyword id="KW-0862">Zinc</keyword>
<dbReference type="EC" id="2.7.7.6" evidence="1"/>
<dbReference type="EMBL" id="CP000830">
    <property type="protein sequence ID" value="ABV92018.1"/>
    <property type="molecule type" value="Genomic_DNA"/>
</dbReference>
<dbReference type="RefSeq" id="WP_012176951.1">
    <property type="nucleotide sequence ID" value="NC_009952.1"/>
</dbReference>
<dbReference type="SMR" id="A8LM41"/>
<dbReference type="STRING" id="398580.Dshi_0269"/>
<dbReference type="KEGG" id="dsh:Dshi_0269"/>
<dbReference type="eggNOG" id="COG0086">
    <property type="taxonomic scope" value="Bacteria"/>
</dbReference>
<dbReference type="HOGENOM" id="CLU_000524_3_1_5"/>
<dbReference type="OrthoDB" id="9815296at2"/>
<dbReference type="Proteomes" id="UP000006833">
    <property type="component" value="Chromosome"/>
</dbReference>
<dbReference type="GO" id="GO:0000428">
    <property type="term" value="C:DNA-directed RNA polymerase complex"/>
    <property type="evidence" value="ECO:0007669"/>
    <property type="project" value="UniProtKB-KW"/>
</dbReference>
<dbReference type="GO" id="GO:0003677">
    <property type="term" value="F:DNA binding"/>
    <property type="evidence" value="ECO:0007669"/>
    <property type="project" value="UniProtKB-UniRule"/>
</dbReference>
<dbReference type="GO" id="GO:0003899">
    <property type="term" value="F:DNA-directed RNA polymerase activity"/>
    <property type="evidence" value="ECO:0007669"/>
    <property type="project" value="UniProtKB-UniRule"/>
</dbReference>
<dbReference type="GO" id="GO:0000287">
    <property type="term" value="F:magnesium ion binding"/>
    <property type="evidence" value="ECO:0007669"/>
    <property type="project" value="UniProtKB-UniRule"/>
</dbReference>
<dbReference type="GO" id="GO:0008270">
    <property type="term" value="F:zinc ion binding"/>
    <property type="evidence" value="ECO:0007669"/>
    <property type="project" value="UniProtKB-UniRule"/>
</dbReference>
<dbReference type="GO" id="GO:0006351">
    <property type="term" value="P:DNA-templated transcription"/>
    <property type="evidence" value="ECO:0007669"/>
    <property type="project" value="UniProtKB-UniRule"/>
</dbReference>
<dbReference type="CDD" id="cd02655">
    <property type="entry name" value="RNAP_beta'_C"/>
    <property type="match status" value="1"/>
</dbReference>
<dbReference type="CDD" id="cd01609">
    <property type="entry name" value="RNAP_beta'_N"/>
    <property type="match status" value="1"/>
</dbReference>
<dbReference type="FunFam" id="4.10.860.120:FF:000001">
    <property type="entry name" value="DNA-directed RNA polymerase subunit beta"/>
    <property type="match status" value="1"/>
</dbReference>
<dbReference type="Gene3D" id="1.10.132.30">
    <property type="match status" value="1"/>
</dbReference>
<dbReference type="Gene3D" id="1.10.150.390">
    <property type="match status" value="1"/>
</dbReference>
<dbReference type="Gene3D" id="1.10.1790.20">
    <property type="match status" value="1"/>
</dbReference>
<dbReference type="Gene3D" id="1.10.40.90">
    <property type="match status" value="1"/>
</dbReference>
<dbReference type="Gene3D" id="2.40.40.20">
    <property type="match status" value="1"/>
</dbReference>
<dbReference type="Gene3D" id="2.40.50.100">
    <property type="match status" value="3"/>
</dbReference>
<dbReference type="Gene3D" id="4.10.860.120">
    <property type="entry name" value="RNA polymerase II, clamp domain"/>
    <property type="match status" value="1"/>
</dbReference>
<dbReference type="Gene3D" id="1.10.274.100">
    <property type="entry name" value="RNA polymerase Rpb1, domain 3"/>
    <property type="match status" value="2"/>
</dbReference>
<dbReference type="HAMAP" id="MF_01322">
    <property type="entry name" value="RNApol_bact_RpoC"/>
    <property type="match status" value="1"/>
</dbReference>
<dbReference type="InterPro" id="IPR045867">
    <property type="entry name" value="DNA-dir_RpoC_beta_prime"/>
</dbReference>
<dbReference type="InterPro" id="IPR012754">
    <property type="entry name" value="DNA-dir_RpoC_beta_prime_bact"/>
</dbReference>
<dbReference type="InterPro" id="IPR000722">
    <property type="entry name" value="RNA_pol_asu"/>
</dbReference>
<dbReference type="InterPro" id="IPR006592">
    <property type="entry name" value="RNA_pol_N"/>
</dbReference>
<dbReference type="InterPro" id="IPR007080">
    <property type="entry name" value="RNA_pol_Rpb1_1"/>
</dbReference>
<dbReference type="InterPro" id="IPR007066">
    <property type="entry name" value="RNA_pol_Rpb1_3"/>
</dbReference>
<dbReference type="InterPro" id="IPR042102">
    <property type="entry name" value="RNA_pol_Rpb1_3_sf"/>
</dbReference>
<dbReference type="InterPro" id="IPR007083">
    <property type="entry name" value="RNA_pol_Rpb1_4"/>
</dbReference>
<dbReference type="InterPro" id="IPR007081">
    <property type="entry name" value="RNA_pol_Rpb1_5"/>
</dbReference>
<dbReference type="InterPro" id="IPR044893">
    <property type="entry name" value="RNA_pol_Rpb1_clamp_domain"/>
</dbReference>
<dbReference type="InterPro" id="IPR038120">
    <property type="entry name" value="Rpb1_funnel_sf"/>
</dbReference>
<dbReference type="NCBIfam" id="TIGR02386">
    <property type="entry name" value="rpoC_TIGR"/>
    <property type="match status" value="1"/>
</dbReference>
<dbReference type="PANTHER" id="PTHR19376">
    <property type="entry name" value="DNA-DIRECTED RNA POLYMERASE"/>
    <property type="match status" value="1"/>
</dbReference>
<dbReference type="PANTHER" id="PTHR19376:SF54">
    <property type="entry name" value="DNA-DIRECTED RNA POLYMERASE SUBUNIT BETA"/>
    <property type="match status" value="1"/>
</dbReference>
<dbReference type="Pfam" id="PF04997">
    <property type="entry name" value="RNA_pol_Rpb1_1"/>
    <property type="match status" value="1"/>
</dbReference>
<dbReference type="Pfam" id="PF00623">
    <property type="entry name" value="RNA_pol_Rpb1_2"/>
    <property type="match status" value="2"/>
</dbReference>
<dbReference type="Pfam" id="PF04983">
    <property type="entry name" value="RNA_pol_Rpb1_3"/>
    <property type="match status" value="1"/>
</dbReference>
<dbReference type="Pfam" id="PF05000">
    <property type="entry name" value="RNA_pol_Rpb1_4"/>
    <property type="match status" value="1"/>
</dbReference>
<dbReference type="Pfam" id="PF04998">
    <property type="entry name" value="RNA_pol_Rpb1_5"/>
    <property type="match status" value="1"/>
</dbReference>
<dbReference type="SMART" id="SM00663">
    <property type="entry name" value="RPOLA_N"/>
    <property type="match status" value="1"/>
</dbReference>
<dbReference type="SUPFAM" id="SSF64484">
    <property type="entry name" value="beta and beta-prime subunits of DNA dependent RNA-polymerase"/>
    <property type="match status" value="1"/>
</dbReference>
<reference key="1">
    <citation type="journal article" date="2010" name="ISME J.">
        <title>The complete genome sequence of the algal symbiont Dinoroseobacter shibae: a hitchhiker's guide to life in the sea.</title>
        <authorList>
            <person name="Wagner-Dobler I."/>
            <person name="Ballhausen B."/>
            <person name="Berger M."/>
            <person name="Brinkhoff T."/>
            <person name="Buchholz I."/>
            <person name="Bunk B."/>
            <person name="Cypionka H."/>
            <person name="Daniel R."/>
            <person name="Drepper T."/>
            <person name="Gerdts G."/>
            <person name="Hahnke S."/>
            <person name="Han C."/>
            <person name="Jahn D."/>
            <person name="Kalhoefer D."/>
            <person name="Kiss H."/>
            <person name="Klenk H.P."/>
            <person name="Kyrpides N."/>
            <person name="Liebl W."/>
            <person name="Liesegang H."/>
            <person name="Meincke L."/>
            <person name="Pati A."/>
            <person name="Petersen J."/>
            <person name="Piekarski T."/>
            <person name="Pommerenke C."/>
            <person name="Pradella S."/>
            <person name="Pukall R."/>
            <person name="Rabus R."/>
            <person name="Stackebrandt E."/>
            <person name="Thole S."/>
            <person name="Thompson L."/>
            <person name="Tielen P."/>
            <person name="Tomasch J."/>
            <person name="von Jan M."/>
            <person name="Wanphrut N."/>
            <person name="Wichels A."/>
            <person name="Zech H."/>
            <person name="Simon M."/>
        </authorList>
    </citation>
    <scope>NUCLEOTIDE SEQUENCE [LARGE SCALE GENOMIC DNA]</scope>
    <source>
        <strain>DSM 16493 / NCIMB 14021 / DFL 12</strain>
    </source>
</reference>
<gene>
    <name evidence="1" type="primary">rpoC</name>
    <name type="ordered locus">Dshi_0269</name>
</gene>
<name>RPOC_DINSH</name>
<sequence>MNQELTTNPFNPVAPVKTFDEIKVSLASPERILSWSFGEIKKPETINYRTFKPERDGLFCARIFGPIKDYECLCGKYKRMKYRGVICEKCGVEVTLQKVRRERMGHIELAAPVAHIWFLKSLPSRIGTMLDMTLRDLERILYFENYVVIEPGLTDLTYGQLMTEEEFLDAQDAYGMDAFTANIGAEAIREMLAAIDLETEAEQLRADLAEATGELKPKKIIKRLKLVENFLESGNRPEWMVLTVVPVIPPELRPLVPLDGGRFATSDLNDLYRRVINRNNRLKRLIELRAPDIIIRNEKRMLQESVDALFDNGRRGRVITGANKRPLKSLSDMLKGKQGRFRQNLLGKRVDFSGRSVIVTGPELKLHQCGLPKKMALELFKPFIYSRLEAKGLSSTVKQAKKLVEKERPEVWDILDEVIREHPVMLNRAPTLHRLGIQAFEPVLIEGKAIQLHPLVCSAFNADFDGDQMAVHVPLSLEAQLEARVLMMSTNNVLSPANGAPIIVPSQDMILGLYYITLEREGLPGQGMIFGSPEEVEHALTAGTVHLHSKIQARVKQIDDEGNEIYKRYETTPGRVRLGALLPLNAKAPFELVNRLLRKKEVQQVIDTVYRYCGQKESVIFCDQIMTLGFREAFKAGISFGKDDMLIPDTKWDIVEGVRDQVKEFEQQYMDGLITQGEKYNKVVDAWSKCSDEVASEMMDEISRDRFDPDTKEQMEPNSVYMMAHSGARGSPAQMKQLGGMRGLMAKPSGEIIETPIISNFKEGLTVLEYFNSTHGARKGLADTALKTANSGYLTRRLVDVAQDCIVRLNDCGTENAITAEAAVNDGEVVASLGERVLGRVAAEDVVDPASGEVIVAKGELIDERKADLIEQSSIQSMRMRSPLTCEADEGVCAQCYGRDLARGTKVNVGEAVGIIAAQSIGEPGTQLTMRTFHIGGIAQGGQQSFQEAGQEGKIAFRNANLLENTSGEKIVMGRNMQLLIVDGEGAERASFKLGYGTKVHVAEGDKVGRGDKLFEWDPYTLPIIAEKSGVVRFADLVSGISVREETDDATGMTQKIVSDWRAAPKGSDLKPEVLIADPETGEPVRNDAGNPVTYPMSVDAILSIEDGMPISAGDVVARIPREGAKTKDITGGLPRVAELFEARRPKDHAIIAEIDGYVRFGRDYKNKRRISIEPSDETMEPVEYMVPKGKHIPVAEGDFVQKGDYIMDGNPAPHDILRIMGIEALADYLINEVQDVYRLQGVKINDKHIEVIVRQMLQKWEILDSGETTLLKGEHVDKLQFEAVNEKAIAEGRRPAQGEPILLGITKASLQTRSFISAASFQETTKVLTEASTMGKRDKLIGLKENVIVGRLIPAGTGGATQQMRRIAQERDQKVIEQRQAEAEEAAALAAPMAEDVFEDGGDMADISMPESRD</sequence>
<proteinExistence type="inferred from homology"/>